<comment type="function">
    <text evidence="1">Produces ATP from ADP in the presence of a proton gradient across the membrane. The catalytic sites are hosted primarily by the beta subunits.</text>
</comment>
<comment type="catalytic activity">
    <reaction evidence="1">
        <text>ATP + H2O + 4 H(+)(in) = ADP + phosphate + 5 H(+)(out)</text>
        <dbReference type="Rhea" id="RHEA:57720"/>
        <dbReference type="ChEBI" id="CHEBI:15377"/>
        <dbReference type="ChEBI" id="CHEBI:15378"/>
        <dbReference type="ChEBI" id="CHEBI:30616"/>
        <dbReference type="ChEBI" id="CHEBI:43474"/>
        <dbReference type="ChEBI" id="CHEBI:456216"/>
        <dbReference type="EC" id="7.1.2.2"/>
    </reaction>
</comment>
<comment type="subunit">
    <text evidence="1">F-type ATPases have 2 components, CF(1) - the catalytic core - and CF(0) - the membrane proton channel. CF(1) has five subunits: alpha(3), beta(3), gamma(1), delta(1), epsilon(1). CF(0) has three main subunits: a(1), b(2) and c(9-12). The alpha and beta chains form an alternating ring which encloses part of the gamma chain. CF(1) is attached to CF(0) by a central stalk formed by the gamma and epsilon chains, while a peripheral stalk is formed by the delta and b chains.</text>
</comment>
<comment type="subcellular location">
    <subcellularLocation>
        <location evidence="1">Cell inner membrane</location>
        <topology evidence="1">Peripheral membrane protein</topology>
    </subcellularLocation>
</comment>
<comment type="similarity">
    <text evidence="1">Belongs to the ATPase alpha/beta chains family.</text>
</comment>
<gene>
    <name evidence="1" type="primary">atpD</name>
    <name type="ordered locus">BARBAKC583_0114</name>
</gene>
<feature type="chain" id="PRO_0000339477" description="ATP synthase subunit beta">
    <location>
        <begin position="1"/>
        <end position="537"/>
    </location>
</feature>
<feature type="region of interest" description="Disordered" evidence="2">
    <location>
        <begin position="1"/>
        <end position="61"/>
    </location>
</feature>
<feature type="compositionally biased region" description="Basic and acidic residues" evidence="2">
    <location>
        <begin position="7"/>
        <end position="18"/>
    </location>
</feature>
<feature type="compositionally biased region" description="Polar residues" evidence="2">
    <location>
        <begin position="44"/>
        <end position="55"/>
    </location>
</feature>
<feature type="binding site" evidence="1">
    <location>
        <begin position="209"/>
        <end position="216"/>
    </location>
    <ligand>
        <name>ATP</name>
        <dbReference type="ChEBI" id="CHEBI:30616"/>
    </ligand>
</feature>
<name>ATPB_BARBK</name>
<dbReference type="EC" id="7.1.2.2" evidence="1"/>
<dbReference type="EMBL" id="CP000524">
    <property type="protein sequence ID" value="ABM45035.1"/>
    <property type="molecule type" value="Genomic_DNA"/>
</dbReference>
<dbReference type="RefSeq" id="WP_005765873.1">
    <property type="nucleotide sequence ID" value="NC_008783.1"/>
</dbReference>
<dbReference type="SMR" id="A1UR49"/>
<dbReference type="STRING" id="360095.BARBAKC583_0114"/>
<dbReference type="GeneID" id="4684817"/>
<dbReference type="KEGG" id="bbk:BARBAKC583_0114"/>
<dbReference type="PATRIC" id="fig|360095.6.peg.113"/>
<dbReference type="eggNOG" id="COG0055">
    <property type="taxonomic scope" value="Bacteria"/>
</dbReference>
<dbReference type="HOGENOM" id="CLU_022398_0_2_5"/>
<dbReference type="OrthoDB" id="9801639at2"/>
<dbReference type="Proteomes" id="UP000000643">
    <property type="component" value="Chromosome"/>
</dbReference>
<dbReference type="GO" id="GO:0005886">
    <property type="term" value="C:plasma membrane"/>
    <property type="evidence" value="ECO:0007669"/>
    <property type="project" value="UniProtKB-SubCell"/>
</dbReference>
<dbReference type="GO" id="GO:0045259">
    <property type="term" value="C:proton-transporting ATP synthase complex"/>
    <property type="evidence" value="ECO:0007669"/>
    <property type="project" value="UniProtKB-KW"/>
</dbReference>
<dbReference type="GO" id="GO:0005524">
    <property type="term" value="F:ATP binding"/>
    <property type="evidence" value="ECO:0007669"/>
    <property type="project" value="UniProtKB-UniRule"/>
</dbReference>
<dbReference type="GO" id="GO:0016887">
    <property type="term" value="F:ATP hydrolysis activity"/>
    <property type="evidence" value="ECO:0007669"/>
    <property type="project" value="InterPro"/>
</dbReference>
<dbReference type="GO" id="GO:0046933">
    <property type="term" value="F:proton-transporting ATP synthase activity, rotational mechanism"/>
    <property type="evidence" value="ECO:0007669"/>
    <property type="project" value="UniProtKB-UniRule"/>
</dbReference>
<dbReference type="CDD" id="cd18110">
    <property type="entry name" value="ATP-synt_F1_beta_C"/>
    <property type="match status" value="1"/>
</dbReference>
<dbReference type="CDD" id="cd18115">
    <property type="entry name" value="ATP-synt_F1_beta_N"/>
    <property type="match status" value="1"/>
</dbReference>
<dbReference type="CDD" id="cd01133">
    <property type="entry name" value="F1-ATPase_beta_CD"/>
    <property type="match status" value="1"/>
</dbReference>
<dbReference type="FunFam" id="1.10.1140.10:FF:000001">
    <property type="entry name" value="ATP synthase subunit beta"/>
    <property type="match status" value="1"/>
</dbReference>
<dbReference type="FunFam" id="3.40.50.300:FF:000026">
    <property type="entry name" value="ATP synthase subunit beta"/>
    <property type="match status" value="1"/>
</dbReference>
<dbReference type="Gene3D" id="2.40.10.170">
    <property type="match status" value="1"/>
</dbReference>
<dbReference type="Gene3D" id="1.10.1140.10">
    <property type="entry name" value="Bovine Mitochondrial F1-atpase, Atp Synthase Beta Chain, Chain D, domain 3"/>
    <property type="match status" value="1"/>
</dbReference>
<dbReference type="Gene3D" id="3.40.50.300">
    <property type="entry name" value="P-loop containing nucleotide triphosphate hydrolases"/>
    <property type="match status" value="1"/>
</dbReference>
<dbReference type="HAMAP" id="MF_01347">
    <property type="entry name" value="ATP_synth_beta_bact"/>
    <property type="match status" value="1"/>
</dbReference>
<dbReference type="InterPro" id="IPR003593">
    <property type="entry name" value="AAA+_ATPase"/>
</dbReference>
<dbReference type="InterPro" id="IPR055190">
    <property type="entry name" value="ATP-synt_VA_C"/>
</dbReference>
<dbReference type="InterPro" id="IPR005722">
    <property type="entry name" value="ATP_synth_F1_bsu"/>
</dbReference>
<dbReference type="InterPro" id="IPR020003">
    <property type="entry name" value="ATPase_a/bsu_AS"/>
</dbReference>
<dbReference type="InterPro" id="IPR050053">
    <property type="entry name" value="ATPase_alpha/beta_chains"/>
</dbReference>
<dbReference type="InterPro" id="IPR004100">
    <property type="entry name" value="ATPase_F1/V1/A1_a/bsu_N"/>
</dbReference>
<dbReference type="InterPro" id="IPR036121">
    <property type="entry name" value="ATPase_F1/V1/A1_a/bsu_N_sf"/>
</dbReference>
<dbReference type="InterPro" id="IPR000194">
    <property type="entry name" value="ATPase_F1/V1/A1_a/bsu_nucl-bd"/>
</dbReference>
<dbReference type="InterPro" id="IPR024034">
    <property type="entry name" value="ATPase_F1/V1_b/a_C"/>
</dbReference>
<dbReference type="InterPro" id="IPR027417">
    <property type="entry name" value="P-loop_NTPase"/>
</dbReference>
<dbReference type="NCBIfam" id="TIGR01039">
    <property type="entry name" value="atpD"/>
    <property type="match status" value="1"/>
</dbReference>
<dbReference type="PANTHER" id="PTHR15184">
    <property type="entry name" value="ATP SYNTHASE"/>
    <property type="match status" value="1"/>
</dbReference>
<dbReference type="PANTHER" id="PTHR15184:SF71">
    <property type="entry name" value="ATP SYNTHASE SUBUNIT BETA, MITOCHONDRIAL"/>
    <property type="match status" value="1"/>
</dbReference>
<dbReference type="Pfam" id="PF00006">
    <property type="entry name" value="ATP-synt_ab"/>
    <property type="match status" value="1"/>
</dbReference>
<dbReference type="Pfam" id="PF02874">
    <property type="entry name" value="ATP-synt_ab_N"/>
    <property type="match status" value="1"/>
</dbReference>
<dbReference type="Pfam" id="PF22919">
    <property type="entry name" value="ATP-synt_VA_C"/>
    <property type="match status" value="1"/>
</dbReference>
<dbReference type="PIRSF" id="PIRSF039072">
    <property type="entry name" value="ATPase_subunit_beta"/>
    <property type="match status" value="1"/>
</dbReference>
<dbReference type="SMART" id="SM00382">
    <property type="entry name" value="AAA"/>
    <property type="match status" value="1"/>
</dbReference>
<dbReference type="SUPFAM" id="SSF47917">
    <property type="entry name" value="C-terminal domain of alpha and beta subunits of F1 ATP synthase"/>
    <property type="match status" value="1"/>
</dbReference>
<dbReference type="SUPFAM" id="SSF50615">
    <property type="entry name" value="N-terminal domain of alpha and beta subunits of F1 ATP synthase"/>
    <property type="match status" value="1"/>
</dbReference>
<dbReference type="SUPFAM" id="SSF52540">
    <property type="entry name" value="P-loop containing nucleoside triphosphate hydrolases"/>
    <property type="match status" value="1"/>
</dbReference>
<dbReference type="PROSITE" id="PS00152">
    <property type="entry name" value="ATPASE_ALPHA_BETA"/>
    <property type="match status" value="1"/>
</dbReference>
<protein>
    <recommendedName>
        <fullName evidence="1">ATP synthase subunit beta</fullName>
        <ecNumber evidence="1">7.1.2.2</ecNumber>
    </recommendedName>
    <alternativeName>
        <fullName evidence="1">ATP synthase F1 sector subunit beta</fullName>
    </alternativeName>
    <alternativeName>
        <fullName evidence="1">F-ATPase subunit beta</fullName>
    </alternativeName>
</protein>
<evidence type="ECO:0000255" key="1">
    <source>
        <dbReference type="HAMAP-Rule" id="MF_01347"/>
    </source>
</evidence>
<evidence type="ECO:0000256" key="2">
    <source>
        <dbReference type="SAM" id="MobiDB-lite"/>
    </source>
</evidence>
<reference key="1">
    <citation type="submission" date="2006-12" db="EMBL/GenBank/DDBJ databases">
        <authorList>
            <person name="Hendrix L."/>
            <person name="Mohamoud Y."/>
            <person name="Radune D."/>
            <person name="Shvartsbeyn A."/>
            <person name="Daugherty S."/>
            <person name="Dodson R."/>
            <person name="Durkin A.S."/>
            <person name="Harkins D."/>
            <person name="Huot H."/>
            <person name="Kothari S.P."/>
            <person name="Madupu R."/>
            <person name="Li J."/>
            <person name="Nelson W.C."/>
            <person name="Shrivastava S."/>
            <person name="Giglio M.G."/>
            <person name="Haft D."/>
            <person name="Selengut J."/>
            <person name="Fraser-Ligget C."/>
            <person name="Seshadri R."/>
        </authorList>
    </citation>
    <scope>NUCLEOTIDE SEQUENCE [LARGE SCALE GENOMIC DNA]</scope>
    <source>
        <strain>ATCC 35685 / KC583 / Herrer 020/F12,63</strain>
    </source>
</reference>
<proteinExistence type="inferred from homology"/>
<sequence length="537" mass="57302">MAKAATSKKEASKVEAKKPAARLGAKKTVSKSEESVKTSQSVKNSPSRTGSSSPQKGGKKGAVGEIKQVIGAIVDVQFEGALPNILNALETDRLGSRLILEVAQHLGENTVRTIAMDTTDGLVRGQKVFDTGTQICVPVGEATLGRIMNVIGEPVDEVGPIVTTKTRSIHQKAPEYIEQSTESEILVTGIKVVDLLAPYSKGGKVGLFGGAGVGKTVLIMELINNIAKAHGGYSVFAGVGERTREGNDLYYEMIESRVNVNPKENDGSTKGSKCALVYGQMNEPPGARARVALSGLTIAENFRDEGQDVLFFVDNIFRFTQAGSEVSALLGRIPSAVGYQPTLATDMGALQERITSTKTGSITSVQAIYVPADDLTDPAPATSFAHLDATTVLSRSIAEKGIYPAVDPLDSFSRMLDPLVVGEEHYAVACQVQTILQRYKALQDIIAILGMDELSEEDKLLVGRARRIERFLSQPFHVAEAFTGSPGKLVSLEDTIKGFKGLCAGDYDDLPEAAFYMVGSIDEAIEKGKRLMAEASS</sequence>
<organism>
    <name type="scientific">Bartonella bacilliformis (strain ATCC 35685 / KC583 / Herrer 020/F12,63)</name>
    <dbReference type="NCBI Taxonomy" id="360095"/>
    <lineage>
        <taxon>Bacteria</taxon>
        <taxon>Pseudomonadati</taxon>
        <taxon>Pseudomonadota</taxon>
        <taxon>Alphaproteobacteria</taxon>
        <taxon>Hyphomicrobiales</taxon>
        <taxon>Bartonellaceae</taxon>
        <taxon>Bartonella</taxon>
    </lineage>
</organism>
<keyword id="KW-0066">ATP synthesis</keyword>
<keyword id="KW-0067">ATP-binding</keyword>
<keyword id="KW-0997">Cell inner membrane</keyword>
<keyword id="KW-1003">Cell membrane</keyword>
<keyword id="KW-0139">CF(1)</keyword>
<keyword id="KW-0375">Hydrogen ion transport</keyword>
<keyword id="KW-0406">Ion transport</keyword>
<keyword id="KW-0472">Membrane</keyword>
<keyword id="KW-0547">Nucleotide-binding</keyword>
<keyword id="KW-1278">Translocase</keyword>
<keyword id="KW-0813">Transport</keyword>
<accession>A1UR49</accession>